<protein>
    <recommendedName>
        <fullName evidence="1">Small ribosomal subunit protein bS6</fullName>
    </recommendedName>
    <alternativeName>
        <fullName evidence="3">30S ribosomal protein S6</fullName>
    </alternativeName>
</protein>
<dbReference type="EMBL" id="CP000087">
    <property type="protein sequence ID" value="ABE04203.1"/>
    <property type="molecule type" value="Genomic_DNA"/>
</dbReference>
<dbReference type="RefSeq" id="WP_011476818.1">
    <property type="nucleotide sequence ID" value="NC_007940.1"/>
</dbReference>
<dbReference type="SMR" id="Q1RKB1"/>
<dbReference type="KEGG" id="rbe:RBE_0122"/>
<dbReference type="eggNOG" id="COG0360">
    <property type="taxonomic scope" value="Bacteria"/>
</dbReference>
<dbReference type="HOGENOM" id="CLU_113441_2_0_5"/>
<dbReference type="OrthoDB" id="9812702at2"/>
<dbReference type="Proteomes" id="UP000001951">
    <property type="component" value="Chromosome"/>
</dbReference>
<dbReference type="GO" id="GO:0005737">
    <property type="term" value="C:cytoplasm"/>
    <property type="evidence" value="ECO:0007669"/>
    <property type="project" value="UniProtKB-ARBA"/>
</dbReference>
<dbReference type="GO" id="GO:1990904">
    <property type="term" value="C:ribonucleoprotein complex"/>
    <property type="evidence" value="ECO:0007669"/>
    <property type="project" value="UniProtKB-KW"/>
</dbReference>
<dbReference type="GO" id="GO:0005840">
    <property type="term" value="C:ribosome"/>
    <property type="evidence" value="ECO:0007669"/>
    <property type="project" value="UniProtKB-KW"/>
</dbReference>
<dbReference type="GO" id="GO:0070181">
    <property type="term" value="F:small ribosomal subunit rRNA binding"/>
    <property type="evidence" value="ECO:0007669"/>
    <property type="project" value="TreeGrafter"/>
</dbReference>
<dbReference type="GO" id="GO:0003735">
    <property type="term" value="F:structural constituent of ribosome"/>
    <property type="evidence" value="ECO:0007669"/>
    <property type="project" value="InterPro"/>
</dbReference>
<dbReference type="GO" id="GO:0006412">
    <property type="term" value="P:translation"/>
    <property type="evidence" value="ECO:0007669"/>
    <property type="project" value="UniProtKB-UniRule"/>
</dbReference>
<dbReference type="CDD" id="cd00473">
    <property type="entry name" value="bS6"/>
    <property type="match status" value="1"/>
</dbReference>
<dbReference type="Gene3D" id="3.30.70.60">
    <property type="match status" value="1"/>
</dbReference>
<dbReference type="HAMAP" id="MF_00360">
    <property type="entry name" value="Ribosomal_bS6"/>
    <property type="match status" value="1"/>
</dbReference>
<dbReference type="InterPro" id="IPR000529">
    <property type="entry name" value="Ribosomal_bS6"/>
</dbReference>
<dbReference type="InterPro" id="IPR035980">
    <property type="entry name" value="Ribosomal_bS6_sf"/>
</dbReference>
<dbReference type="InterPro" id="IPR020814">
    <property type="entry name" value="Ribosomal_S6_plastid/chlpt"/>
</dbReference>
<dbReference type="InterPro" id="IPR014717">
    <property type="entry name" value="Transl_elong_EF1B/ribsomal_bS6"/>
</dbReference>
<dbReference type="NCBIfam" id="TIGR00166">
    <property type="entry name" value="S6"/>
    <property type="match status" value="1"/>
</dbReference>
<dbReference type="PANTHER" id="PTHR21011">
    <property type="entry name" value="MITOCHONDRIAL 28S RIBOSOMAL PROTEIN S6"/>
    <property type="match status" value="1"/>
</dbReference>
<dbReference type="PANTHER" id="PTHR21011:SF1">
    <property type="entry name" value="SMALL RIBOSOMAL SUBUNIT PROTEIN BS6M"/>
    <property type="match status" value="1"/>
</dbReference>
<dbReference type="Pfam" id="PF01250">
    <property type="entry name" value="Ribosomal_S6"/>
    <property type="match status" value="1"/>
</dbReference>
<dbReference type="SUPFAM" id="SSF54995">
    <property type="entry name" value="Ribosomal protein S6"/>
    <property type="match status" value="1"/>
</dbReference>
<feature type="chain" id="PRO_0000273735" description="Small ribosomal subunit protein bS6">
    <location>
        <begin position="1"/>
        <end position="120"/>
    </location>
</feature>
<feature type="region of interest" description="Disordered" evidence="2">
    <location>
        <begin position="97"/>
        <end position="120"/>
    </location>
</feature>
<feature type="compositionally biased region" description="Polar residues" evidence="2">
    <location>
        <begin position="97"/>
        <end position="112"/>
    </location>
</feature>
<keyword id="KW-0687">Ribonucleoprotein</keyword>
<keyword id="KW-0689">Ribosomal protein</keyword>
<keyword id="KW-0694">RNA-binding</keyword>
<keyword id="KW-0699">rRNA-binding</keyword>
<gene>
    <name evidence="1" type="primary">rpsF</name>
    <name type="ordered locus">RBE_0122</name>
</gene>
<name>RS6_RICBR</name>
<comment type="function">
    <text evidence="1">Binds together with bS18 to 16S ribosomal RNA.</text>
</comment>
<comment type="similarity">
    <text evidence="1">Belongs to the bacterial ribosomal protein bS6 family.</text>
</comment>
<sequence>MSFYESVFIVRQDVSLNDIDKIVDDFSKIIKDNNGAIVKKEYWGLRALAYKIGNHKKGHYYLLGLDTTPAVKQELERKMKLNENIIRFLTQKVDSISNEPSPILKNQSTENTPVIDVTAN</sequence>
<organism>
    <name type="scientific">Rickettsia bellii (strain RML369-C)</name>
    <dbReference type="NCBI Taxonomy" id="336407"/>
    <lineage>
        <taxon>Bacteria</taxon>
        <taxon>Pseudomonadati</taxon>
        <taxon>Pseudomonadota</taxon>
        <taxon>Alphaproteobacteria</taxon>
        <taxon>Rickettsiales</taxon>
        <taxon>Rickettsiaceae</taxon>
        <taxon>Rickettsieae</taxon>
        <taxon>Rickettsia</taxon>
        <taxon>belli group</taxon>
    </lineage>
</organism>
<reference key="1">
    <citation type="journal article" date="2006" name="PLoS Genet.">
        <title>Genome sequence of Rickettsia bellii illuminates the role of amoebae in gene exchanges between intracellular pathogens.</title>
        <authorList>
            <person name="Ogata H."/>
            <person name="La Scola B."/>
            <person name="Audic S."/>
            <person name="Renesto P."/>
            <person name="Blanc G."/>
            <person name="Robert C."/>
            <person name="Fournier P.-E."/>
            <person name="Claverie J.-M."/>
            <person name="Raoult D."/>
        </authorList>
    </citation>
    <scope>NUCLEOTIDE SEQUENCE [LARGE SCALE GENOMIC DNA]</scope>
    <source>
        <strain>RML369-C</strain>
    </source>
</reference>
<evidence type="ECO:0000255" key="1">
    <source>
        <dbReference type="HAMAP-Rule" id="MF_00360"/>
    </source>
</evidence>
<evidence type="ECO:0000256" key="2">
    <source>
        <dbReference type="SAM" id="MobiDB-lite"/>
    </source>
</evidence>
<evidence type="ECO:0000305" key="3"/>
<accession>Q1RKB1</accession>
<proteinExistence type="inferred from homology"/>